<reference key="1">
    <citation type="journal article" date="2007" name="J. Bacteriol.">
        <title>Genome sequence analysis of the emerging human pathogenic acetic acid bacterium Granulibacter bethesdensis.</title>
        <authorList>
            <person name="Greenberg D.E."/>
            <person name="Porcella S.F."/>
            <person name="Zelazny A.M."/>
            <person name="Virtaneva K."/>
            <person name="Sturdevant D.E."/>
            <person name="Kupko J.J. III"/>
            <person name="Barbian K.D."/>
            <person name="Babar A."/>
            <person name="Dorward D.W."/>
            <person name="Holland S.M."/>
        </authorList>
    </citation>
    <scope>NUCLEOTIDE SEQUENCE [LARGE SCALE GENOMIC DNA]</scope>
    <source>
        <strain>ATCC BAA-1260 / CGDNIH1</strain>
    </source>
</reference>
<gene>
    <name evidence="1" type="primary">rpoB</name>
    <name type="ordered locus">GbCGDNIH1_0548</name>
</gene>
<dbReference type="EC" id="2.7.7.6" evidence="1"/>
<dbReference type="EMBL" id="CP000394">
    <property type="protein sequence ID" value="ABI61446.1"/>
    <property type="molecule type" value="Genomic_DNA"/>
</dbReference>
<dbReference type="RefSeq" id="WP_011631256.1">
    <property type="nucleotide sequence ID" value="NC_008343.2"/>
</dbReference>
<dbReference type="SMR" id="Q0BUQ6"/>
<dbReference type="STRING" id="391165.GbCGDNIH1_0548"/>
<dbReference type="KEGG" id="gbe:GbCGDNIH1_0548"/>
<dbReference type="eggNOG" id="COG0085">
    <property type="taxonomic scope" value="Bacteria"/>
</dbReference>
<dbReference type="HOGENOM" id="CLU_000524_4_0_5"/>
<dbReference type="OrthoDB" id="9803954at2"/>
<dbReference type="Proteomes" id="UP000001963">
    <property type="component" value="Chromosome"/>
</dbReference>
<dbReference type="GO" id="GO:0000428">
    <property type="term" value="C:DNA-directed RNA polymerase complex"/>
    <property type="evidence" value="ECO:0007669"/>
    <property type="project" value="UniProtKB-KW"/>
</dbReference>
<dbReference type="GO" id="GO:0003677">
    <property type="term" value="F:DNA binding"/>
    <property type="evidence" value="ECO:0007669"/>
    <property type="project" value="UniProtKB-UniRule"/>
</dbReference>
<dbReference type="GO" id="GO:0003899">
    <property type="term" value="F:DNA-directed RNA polymerase activity"/>
    <property type="evidence" value="ECO:0007669"/>
    <property type="project" value="UniProtKB-UniRule"/>
</dbReference>
<dbReference type="GO" id="GO:0032549">
    <property type="term" value="F:ribonucleoside binding"/>
    <property type="evidence" value="ECO:0007669"/>
    <property type="project" value="InterPro"/>
</dbReference>
<dbReference type="GO" id="GO:0006351">
    <property type="term" value="P:DNA-templated transcription"/>
    <property type="evidence" value="ECO:0007669"/>
    <property type="project" value="UniProtKB-UniRule"/>
</dbReference>
<dbReference type="CDD" id="cd00653">
    <property type="entry name" value="RNA_pol_B_RPB2"/>
    <property type="match status" value="1"/>
</dbReference>
<dbReference type="FunFam" id="3.90.1800.10:FF:000001">
    <property type="entry name" value="DNA-directed RNA polymerase subunit beta"/>
    <property type="match status" value="1"/>
</dbReference>
<dbReference type="Gene3D" id="2.40.50.100">
    <property type="match status" value="1"/>
</dbReference>
<dbReference type="Gene3D" id="2.40.50.150">
    <property type="match status" value="1"/>
</dbReference>
<dbReference type="Gene3D" id="3.90.1100.10">
    <property type="match status" value="2"/>
</dbReference>
<dbReference type="Gene3D" id="2.30.150.10">
    <property type="entry name" value="DNA-directed RNA polymerase, beta subunit, external 1 domain"/>
    <property type="match status" value="1"/>
</dbReference>
<dbReference type="Gene3D" id="2.40.270.10">
    <property type="entry name" value="DNA-directed RNA polymerase, subunit 2, domain 6"/>
    <property type="match status" value="1"/>
</dbReference>
<dbReference type="Gene3D" id="3.90.1800.10">
    <property type="entry name" value="RNA polymerase alpha subunit dimerisation domain"/>
    <property type="match status" value="1"/>
</dbReference>
<dbReference type="Gene3D" id="3.90.1110.10">
    <property type="entry name" value="RNA polymerase Rpb2, domain 2"/>
    <property type="match status" value="1"/>
</dbReference>
<dbReference type="HAMAP" id="MF_01321">
    <property type="entry name" value="RNApol_bact_RpoB"/>
    <property type="match status" value="1"/>
</dbReference>
<dbReference type="InterPro" id="IPR042107">
    <property type="entry name" value="DNA-dir_RNA_pol_bsu_ext_1_sf"/>
</dbReference>
<dbReference type="InterPro" id="IPR019462">
    <property type="entry name" value="DNA-dir_RNA_pol_bsu_external_1"/>
</dbReference>
<dbReference type="InterPro" id="IPR015712">
    <property type="entry name" value="DNA-dir_RNA_pol_su2"/>
</dbReference>
<dbReference type="InterPro" id="IPR007120">
    <property type="entry name" value="DNA-dir_RNAP_su2_dom"/>
</dbReference>
<dbReference type="InterPro" id="IPR037033">
    <property type="entry name" value="DNA-dir_RNAP_su2_hyb_sf"/>
</dbReference>
<dbReference type="InterPro" id="IPR010243">
    <property type="entry name" value="RNA_pol_bsu_bac"/>
</dbReference>
<dbReference type="InterPro" id="IPR007121">
    <property type="entry name" value="RNA_pol_bsu_CS"/>
</dbReference>
<dbReference type="InterPro" id="IPR007644">
    <property type="entry name" value="RNA_pol_bsu_protrusion"/>
</dbReference>
<dbReference type="InterPro" id="IPR007642">
    <property type="entry name" value="RNA_pol_Rpb2_2"/>
</dbReference>
<dbReference type="InterPro" id="IPR037034">
    <property type="entry name" value="RNA_pol_Rpb2_2_sf"/>
</dbReference>
<dbReference type="InterPro" id="IPR007645">
    <property type="entry name" value="RNA_pol_Rpb2_3"/>
</dbReference>
<dbReference type="InterPro" id="IPR007641">
    <property type="entry name" value="RNA_pol_Rpb2_7"/>
</dbReference>
<dbReference type="InterPro" id="IPR014724">
    <property type="entry name" value="RNA_pol_RPB2_OB-fold"/>
</dbReference>
<dbReference type="NCBIfam" id="NF001616">
    <property type="entry name" value="PRK00405.1"/>
    <property type="match status" value="1"/>
</dbReference>
<dbReference type="NCBIfam" id="TIGR02013">
    <property type="entry name" value="rpoB"/>
    <property type="match status" value="1"/>
</dbReference>
<dbReference type="PANTHER" id="PTHR20856">
    <property type="entry name" value="DNA-DIRECTED RNA POLYMERASE I SUBUNIT 2"/>
    <property type="match status" value="1"/>
</dbReference>
<dbReference type="Pfam" id="PF04563">
    <property type="entry name" value="RNA_pol_Rpb2_1"/>
    <property type="match status" value="1"/>
</dbReference>
<dbReference type="Pfam" id="PF04561">
    <property type="entry name" value="RNA_pol_Rpb2_2"/>
    <property type="match status" value="1"/>
</dbReference>
<dbReference type="Pfam" id="PF04565">
    <property type="entry name" value="RNA_pol_Rpb2_3"/>
    <property type="match status" value="1"/>
</dbReference>
<dbReference type="Pfam" id="PF10385">
    <property type="entry name" value="RNA_pol_Rpb2_45"/>
    <property type="match status" value="1"/>
</dbReference>
<dbReference type="Pfam" id="PF00562">
    <property type="entry name" value="RNA_pol_Rpb2_6"/>
    <property type="match status" value="1"/>
</dbReference>
<dbReference type="Pfam" id="PF04560">
    <property type="entry name" value="RNA_pol_Rpb2_7"/>
    <property type="match status" value="1"/>
</dbReference>
<dbReference type="SUPFAM" id="SSF64484">
    <property type="entry name" value="beta and beta-prime subunits of DNA dependent RNA-polymerase"/>
    <property type="match status" value="1"/>
</dbReference>
<dbReference type="PROSITE" id="PS01166">
    <property type="entry name" value="RNA_POL_BETA"/>
    <property type="match status" value="1"/>
</dbReference>
<name>RPOB_GRABC</name>
<proteinExistence type="inferred from homology"/>
<feature type="chain" id="PRO_0000300323" description="DNA-directed RNA polymerase subunit beta">
    <location>
        <begin position="1"/>
        <end position="1391"/>
    </location>
</feature>
<comment type="function">
    <text evidence="1">DNA-dependent RNA polymerase catalyzes the transcription of DNA into RNA using the four ribonucleoside triphosphates as substrates.</text>
</comment>
<comment type="catalytic activity">
    <reaction evidence="1">
        <text>RNA(n) + a ribonucleoside 5'-triphosphate = RNA(n+1) + diphosphate</text>
        <dbReference type="Rhea" id="RHEA:21248"/>
        <dbReference type="Rhea" id="RHEA-COMP:14527"/>
        <dbReference type="Rhea" id="RHEA-COMP:17342"/>
        <dbReference type="ChEBI" id="CHEBI:33019"/>
        <dbReference type="ChEBI" id="CHEBI:61557"/>
        <dbReference type="ChEBI" id="CHEBI:140395"/>
        <dbReference type="EC" id="2.7.7.6"/>
    </reaction>
</comment>
<comment type="subunit">
    <text evidence="1">The RNAP catalytic core consists of 2 alpha, 1 beta, 1 beta' and 1 omega subunit. When a sigma factor is associated with the core the holoenzyme is formed, which can initiate transcription.</text>
</comment>
<comment type="similarity">
    <text evidence="1">Belongs to the RNA polymerase beta chain family.</text>
</comment>
<sequence>MNAITQRDSKSFTGRKRIRKSFARIGDVVPMPNLIDVQRASYEAFLQMNVHPDNRTPTGLQEVFRSVFPIDDFAGRGRLEFVNYELEEPKYDVEECIQRGMTFAAPLKVILRLIVWDVDEDTGSRSIRDIKEQPVYMGDMPLMTDNGTFIINGTERVIVSQMHRSPGVFFDHDKGKTHSSGKFLFAARVIPYRGSWLDFEFDSKDLVYVRIDRRRKLPVTTLLYALEGQRTEAAIASGTDPQDLPEIHGMTAEEILSYFYTQVVFTSTPKGWARPFDPEAFRGITLAEALIDADTGTVVAEAGTKLTARSARKIAEQAKTVLVGRADLLGRYMAEDLVNDQTGEIYAEAGEELTEARLAALETLGVTSLPTLAVDQTTGPWIRNTLAIDKNSTRDDALIDIYRVMRPGEPPTPETAEALFRGLFFDMDRYDLSSVGRVKMNMRLGVDAPDTVRTLRKEDILRTVKILCDLKDGRGAIDDIDNLGNRRVRSVGELMENQYRLGLLRMERAIRERMGSVDIDTVMPHDLINAKPAAAAVREFFGSSQLSQFMDQTNPLSEVTHKRRLSALGPGGLTRERAGFEVRDVHPTHYGRICPIETPEGPNIGLINSLATYAKVNKYGFIETPYRMVEDGKVSDQWRYLSAMEEDRLVVAQADAPRDSTGKLTEELISVRRQGDFRLVKPEDVTSMDVSPKQLVSVAAALIPFLENDDANRALMGSNMQRQAVPLIRADAPLVGTGMEAAVARDSGATIVARRAGVVDQIDGARIVVRASGEDGATQGVDIYRLRKFMRSNQSTCINQRPLVKVGDHVISGDIIADGPSTELGELALGRNVLCAFMPWNGYNFEDSILISERIARDDVFTSIHIEEFEVMARDTKLGQEEITRDIPNVGEEALRNLDEAGIVYIGAEVNPGDILVGKVTPKGESPMTPEEKLLRAIFGEKASDVRDTSLKLPPGTTGTIVDVRVFSRRGVDKDERAMAIERAEIERLAKDRDDERGIQERAFLNRLREKLMGHPASGGFKGIKAGTIITDEVLAEHPRGAWRNISVQDDAVVADIELLKREFDAAVAKIQARFEGKVEKLQRGDELPPGVMKMVKVFVAVKRKLQPGDKMAGRHGNKGVVSRVVPVEDMPFLEDGTPVDLVLNPLGVPSRMNVGQILETHLGWACANLGRQIGELVEDYRRNGQQRDELLSRLREIYGENVYNDVIADMNNDQLIELAENLRKGVPIATPVFDGARPSDIENMLSRAGLDTSGQVVLTDGRTGEPFERKVTVGYIYMLKLHHLVDDKIHARSIGPYSLVTQQPLGGKAQFGGQRFGEMEVWALEAYGAAYTLQEMLTVKSDDVSGRTKVYEAIVRDQDSFEAGIPESFNVLMKELKSLGLNVDLENRSA</sequence>
<accession>Q0BUQ6</accession>
<evidence type="ECO:0000255" key="1">
    <source>
        <dbReference type="HAMAP-Rule" id="MF_01321"/>
    </source>
</evidence>
<keyword id="KW-0240">DNA-directed RNA polymerase</keyword>
<keyword id="KW-0548">Nucleotidyltransferase</keyword>
<keyword id="KW-1185">Reference proteome</keyword>
<keyword id="KW-0804">Transcription</keyword>
<keyword id="KW-0808">Transferase</keyword>
<protein>
    <recommendedName>
        <fullName evidence="1">DNA-directed RNA polymerase subunit beta</fullName>
        <shortName evidence="1">RNAP subunit beta</shortName>
        <ecNumber evidence="1">2.7.7.6</ecNumber>
    </recommendedName>
    <alternativeName>
        <fullName evidence="1">RNA polymerase subunit beta</fullName>
    </alternativeName>
    <alternativeName>
        <fullName evidence="1">Transcriptase subunit beta</fullName>
    </alternativeName>
</protein>
<organism>
    <name type="scientific">Granulibacter bethesdensis (strain ATCC BAA-1260 / CGDNIH1)</name>
    <dbReference type="NCBI Taxonomy" id="391165"/>
    <lineage>
        <taxon>Bacteria</taxon>
        <taxon>Pseudomonadati</taxon>
        <taxon>Pseudomonadota</taxon>
        <taxon>Alphaproteobacteria</taxon>
        <taxon>Acetobacterales</taxon>
        <taxon>Acetobacteraceae</taxon>
        <taxon>Granulibacter</taxon>
    </lineage>
</organism>